<protein>
    <recommendedName>
        <fullName evidence="1">Hydroxyethylthiazole kinase 2</fullName>
        <ecNumber evidence="1">2.7.1.50</ecNumber>
    </recommendedName>
    <alternativeName>
        <fullName evidence="1">4-methyl-5-beta-hydroxyethylthiazole kinase 2</fullName>
        <shortName evidence="1">TH kinase 2</shortName>
        <shortName evidence="1">Thz kinase 2</shortName>
    </alternativeName>
</protein>
<name>THIM2_LEUMM</name>
<dbReference type="EC" id="2.7.1.50" evidence="1"/>
<dbReference type="EMBL" id="CP000414">
    <property type="protein sequence ID" value="ABJ62044.1"/>
    <property type="molecule type" value="Genomic_DNA"/>
</dbReference>
<dbReference type="RefSeq" id="WP_011679697.1">
    <property type="nucleotide sequence ID" value="NC_008531.1"/>
</dbReference>
<dbReference type="SMR" id="Q03XM8"/>
<dbReference type="EnsemblBacteria" id="ABJ62044">
    <property type="protein sequence ID" value="ABJ62044"/>
    <property type="gene ID" value="LEUM_0938"/>
</dbReference>
<dbReference type="GeneID" id="29576371"/>
<dbReference type="KEGG" id="lme:LEUM_0938"/>
<dbReference type="eggNOG" id="COG2145">
    <property type="taxonomic scope" value="Bacteria"/>
</dbReference>
<dbReference type="HOGENOM" id="CLU_019943_0_0_9"/>
<dbReference type="UniPathway" id="UPA00060">
    <property type="reaction ID" value="UER00139"/>
</dbReference>
<dbReference type="Proteomes" id="UP000000362">
    <property type="component" value="Chromosome"/>
</dbReference>
<dbReference type="GO" id="GO:0005524">
    <property type="term" value="F:ATP binding"/>
    <property type="evidence" value="ECO:0007669"/>
    <property type="project" value="UniProtKB-UniRule"/>
</dbReference>
<dbReference type="GO" id="GO:0004417">
    <property type="term" value="F:hydroxyethylthiazole kinase activity"/>
    <property type="evidence" value="ECO:0007669"/>
    <property type="project" value="UniProtKB-UniRule"/>
</dbReference>
<dbReference type="GO" id="GO:0000287">
    <property type="term" value="F:magnesium ion binding"/>
    <property type="evidence" value="ECO:0007669"/>
    <property type="project" value="UniProtKB-UniRule"/>
</dbReference>
<dbReference type="GO" id="GO:0009228">
    <property type="term" value="P:thiamine biosynthetic process"/>
    <property type="evidence" value="ECO:0007669"/>
    <property type="project" value="UniProtKB-KW"/>
</dbReference>
<dbReference type="GO" id="GO:0009229">
    <property type="term" value="P:thiamine diphosphate biosynthetic process"/>
    <property type="evidence" value="ECO:0007669"/>
    <property type="project" value="UniProtKB-UniRule"/>
</dbReference>
<dbReference type="CDD" id="cd01170">
    <property type="entry name" value="THZ_kinase"/>
    <property type="match status" value="1"/>
</dbReference>
<dbReference type="Gene3D" id="3.40.1190.20">
    <property type="match status" value="1"/>
</dbReference>
<dbReference type="HAMAP" id="MF_00228">
    <property type="entry name" value="Thz_kinase"/>
    <property type="match status" value="1"/>
</dbReference>
<dbReference type="InterPro" id="IPR000417">
    <property type="entry name" value="Hyethyz_kinase"/>
</dbReference>
<dbReference type="InterPro" id="IPR029056">
    <property type="entry name" value="Ribokinase-like"/>
</dbReference>
<dbReference type="Pfam" id="PF02110">
    <property type="entry name" value="HK"/>
    <property type="match status" value="1"/>
</dbReference>
<dbReference type="PIRSF" id="PIRSF000513">
    <property type="entry name" value="Thz_kinase"/>
    <property type="match status" value="1"/>
</dbReference>
<dbReference type="PRINTS" id="PR01099">
    <property type="entry name" value="HYETHTZKNASE"/>
</dbReference>
<dbReference type="SUPFAM" id="SSF53613">
    <property type="entry name" value="Ribokinase-like"/>
    <property type="match status" value="1"/>
</dbReference>
<reference key="1">
    <citation type="journal article" date="2006" name="Proc. Natl. Acad. Sci. U.S.A.">
        <title>Comparative genomics of the lactic acid bacteria.</title>
        <authorList>
            <person name="Makarova K.S."/>
            <person name="Slesarev A."/>
            <person name="Wolf Y.I."/>
            <person name="Sorokin A."/>
            <person name="Mirkin B."/>
            <person name="Koonin E.V."/>
            <person name="Pavlov A."/>
            <person name="Pavlova N."/>
            <person name="Karamychev V."/>
            <person name="Polouchine N."/>
            <person name="Shakhova V."/>
            <person name="Grigoriev I."/>
            <person name="Lou Y."/>
            <person name="Rohksar D."/>
            <person name="Lucas S."/>
            <person name="Huang K."/>
            <person name="Goodstein D.M."/>
            <person name="Hawkins T."/>
            <person name="Plengvidhya V."/>
            <person name="Welker D."/>
            <person name="Hughes J."/>
            <person name="Goh Y."/>
            <person name="Benson A."/>
            <person name="Baldwin K."/>
            <person name="Lee J.-H."/>
            <person name="Diaz-Muniz I."/>
            <person name="Dosti B."/>
            <person name="Smeianov V."/>
            <person name="Wechter W."/>
            <person name="Barabote R."/>
            <person name="Lorca G."/>
            <person name="Altermann E."/>
            <person name="Barrangou R."/>
            <person name="Ganesan B."/>
            <person name="Xie Y."/>
            <person name="Rawsthorne H."/>
            <person name="Tamir D."/>
            <person name="Parker C."/>
            <person name="Breidt F."/>
            <person name="Broadbent J.R."/>
            <person name="Hutkins R."/>
            <person name="O'Sullivan D."/>
            <person name="Steele J."/>
            <person name="Unlu G."/>
            <person name="Saier M.H. Jr."/>
            <person name="Klaenhammer T."/>
            <person name="Richardson P."/>
            <person name="Kozyavkin S."/>
            <person name="Weimer B.C."/>
            <person name="Mills D.A."/>
        </authorList>
    </citation>
    <scope>NUCLEOTIDE SEQUENCE [LARGE SCALE GENOMIC DNA]</scope>
    <source>
        <strain>ATCC 8293 / DSM 20343 / BCRC 11652 / CCM 1803 / JCM 6124 / NCDO 523 / NBRC 100496 / NCIMB 8023 / NCTC 12954 / NRRL B-1118 / 37Y</strain>
    </source>
</reference>
<evidence type="ECO:0000255" key="1">
    <source>
        <dbReference type="HAMAP-Rule" id="MF_00228"/>
    </source>
</evidence>
<accession>Q03XM8</accession>
<sequence>MKNELIKIKSILPLQKAPLVHCITNDITLETVANTILYLGGKPIMSSDTREFSSLFQSTDALLLNMGRLNESHEQSLSQASSLADMTKKPTVVDLVGYGITNERTKLGMAMARNHPTVIKGNTSEIRRFVGLPSLAKGIDGASSDQHDQALKDLILSLKQITTEYADTVFVATGKKDVIVQNDKHLILSNGVDELDKFVGTGDMVGAIITTLLAVGEDPWVASQFAISYLNVAAEKALSLTNGMENFRREVLNQIDLLGRNQQWATKIKYSNF</sequence>
<organism>
    <name type="scientific">Leuconostoc mesenteroides subsp. mesenteroides (strain ATCC 8293 / DSM 20343 / BCRC 11652 / CCM 1803 / JCM 6124 / NCDO 523 / NBRC 100496 / NCIMB 8023 / NCTC 12954 / NRRL B-1118 / 37Y)</name>
    <dbReference type="NCBI Taxonomy" id="203120"/>
    <lineage>
        <taxon>Bacteria</taxon>
        <taxon>Bacillati</taxon>
        <taxon>Bacillota</taxon>
        <taxon>Bacilli</taxon>
        <taxon>Lactobacillales</taxon>
        <taxon>Lactobacillaceae</taxon>
        <taxon>Leuconostoc</taxon>
    </lineage>
</organism>
<keyword id="KW-0067">ATP-binding</keyword>
<keyword id="KW-0418">Kinase</keyword>
<keyword id="KW-0460">Magnesium</keyword>
<keyword id="KW-0479">Metal-binding</keyword>
<keyword id="KW-0547">Nucleotide-binding</keyword>
<keyword id="KW-1185">Reference proteome</keyword>
<keyword id="KW-0784">Thiamine biosynthesis</keyword>
<keyword id="KW-0808">Transferase</keyword>
<feature type="chain" id="PRO_0000383882" description="Hydroxyethylthiazole kinase 2">
    <location>
        <begin position="1"/>
        <end position="273"/>
    </location>
</feature>
<feature type="binding site" evidence="1">
    <location>
        <position position="45"/>
    </location>
    <ligand>
        <name>substrate</name>
    </ligand>
</feature>
<feature type="binding site" evidence="1">
    <location>
        <position position="120"/>
    </location>
    <ligand>
        <name>ATP</name>
        <dbReference type="ChEBI" id="CHEBI:30616"/>
    </ligand>
</feature>
<feature type="binding site" evidence="1">
    <location>
        <position position="173"/>
    </location>
    <ligand>
        <name>ATP</name>
        <dbReference type="ChEBI" id="CHEBI:30616"/>
    </ligand>
</feature>
<feature type="binding site" evidence="1">
    <location>
        <position position="200"/>
    </location>
    <ligand>
        <name>substrate</name>
    </ligand>
</feature>
<comment type="function">
    <text evidence="1">Catalyzes the phosphorylation of the hydroxyl group of 4-methyl-5-beta-hydroxyethylthiazole (THZ).</text>
</comment>
<comment type="catalytic activity">
    <reaction evidence="1">
        <text>5-(2-hydroxyethyl)-4-methylthiazole + ATP = 4-methyl-5-(2-phosphooxyethyl)-thiazole + ADP + H(+)</text>
        <dbReference type="Rhea" id="RHEA:24212"/>
        <dbReference type="ChEBI" id="CHEBI:15378"/>
        <dbReference type="ChEBI" id="CHEBI:17957"/>
        <dbReference type="ChEBI" id="CHEBI:30616"/>
        <dbReference type="ChEBI" id="CHEBI:58296"/>
        <dbReference type="ChEBI" id="CHEBI:456216"/>
        <dbReference type="EC" id="2.7.1.50"/>
    </reaction>
</comment>
<comment type="cofactor">
    <cofactor evidence="1">
        <name>Mg(2+)</name>
        <dbReference type="ChEBI" id="CHEBI:18420"/>
    </cofactor>
</comment>
<comment type="pathway">
    <text evidence="1">Cofactor biosynthesis; thiamine diphosphate biosynthesis; 4-methyl-5-(2-phosphoethyl)-thiazole from 5-(2-hydroxyethyl)-4-methylthiazole: step 1/1.</text>
</comment>
<comment type="similarity">
    <text evidence="1">Belongs to the Thz kinase family.</text>
</comment>
<gene>
    <name evidence="1" type="primary">thiM2</name>
    <name type="ordered locus">LEUM_0938</name>
</gene>
<proteinExistence type="inferred from homology"/>